<dbReference type="EC" id="2.6.1.9" evidence="1"/>
<dbReference type="EMBL" id="AE014075">
    <property type="protein sequence ID" value="AAN81003.1"/>
    <property type="molecule type" value="Genomic_DNA"/>
</dbReference>
<dbReference type="RefSeq" id="WP_000108995.1">
    <property type="nucleotide sequence ID" value="NZ_CP051263.1"/>
</dbReference>
<dbReference type="SMR" id="Q8FG51"/>
<dbReference type="STRING" id="199310.c2548"/>
<dbReference type="KEGG" id="ecc:c2548"/>
<dbReference type="eggNOG" id="COG0079">
    <property type="taxonomic scope" value="Bacteria"/>
</dbReference>
<dbReference type="HOGENOM" id="CLU_017584_3_1_6"/>
<dbReference type="BioCyc" id="ECOL199310:C2548-MONOMER"/>
<dbReference type="UniPathway" id="UPA00031">
    <property type="reaction ID" value="UER00012"/>
</dbReference>
<dbReference type="Proteomes" id="UP000001410">
    <property type="component" value="Chromosome"/>
</dbReference>
<dbReference type="GO" id="GO:0004400">
    <property type="term" value="F:histidinol-phosphate transaminase activity"/>
    <property type="evidence" value="ECO:0007669"/>
    <property type="project" value="UniProtKB-UniRule"/>
</dbReference>
<dbReference type="GO" id="GO:0030170">
    <property type="term" value="F:pyridoxal phosphate binding"/>
    <property type="evidence" value="ECO:0007669"/>
    <property type="project" value="InterPro"/>
</dbReference>
<dbReference type="GO" id="GO:0000105">
    <property type="term" value="P:L-histidine biosynthetic process"/>
    <property type="evidence" value="ECO:0007669"/>
    <property type="project" value="UniProtKB-UniRule"/>
</dbReference>
<dbReference type="CDD" id="cd00609">
    <property type="entry name" value="AAT_like"/>
    <property type="match status" value="1"/>
</dbReference>
<dbReference type="FunFam" id="3.40.640.10:FF:000032">
    <property type="entry name" value="Histidinol-phosphate aminotransferase"/>
    <property type="match status" value="1"/>
</dbReference>
<dbReference type="FunFam" id="3.90.1150.10:FF:000042">
    <property type="entry name" value="Histidinol-phosphate aminotransferase"/>
    <property type="match status" value="1"/>
</dbReference>
<dbReference type="Gene3D" id="3.90.1150.10">
    <property type="entry name" value="Aspartate Aminotransferase, domain 1"/>
    <property type="match status" value="1"/>
</dbReference>
<dbReference type="Gene3D" id="3.40.640.10">
    <property type="entry name" value="Type I PLP-dependent aspartate aminotransferase-like (Major domain)"/>
    <property type="match status" value="1"/>
</dbReference>
<dbReference type="HAMAP" id="MF_01023">
    <property type="entry name" value="HisC_aminotrans_2"/>
    <property type="match status" value="1"/>
</dbReference>
<dbReference type="InterPro" id="IPR001917">
    <property type="entry name" value="Aminotrans_II_pyridoxalP_BS"/>
</dbReference>
<dbReference type="InterPro" id="IPR004839">
    <property type="entry name" value="Aminotransferase_I/II_large"/>
</dbReference>
<dbReference type="InterPro" id="IPR005861">
    <property type="entry name" value="HisP_aminotrans"/>
</dbReference>
<dbReference type="InterPro" id="IPR015424">
    <property type="entry name" value="PyrdxlP-dep_Trfase"/>
</dbReference>
<dbReference type="InterPro" id="IPR015421">
    <property type="entry name" value="PyrdxlP-dep_Trfase_major"/>
</dbReference>
<dbReference type="InterPro" id="IPR015422">
    <property type="entry name" value="PyrdxlP-dep_Trfase_small"/>
</dbReference>
<dbReference type="NCBIfam" id="TIGR01141">
    <property type="entry name" value="hisC"/>
    <property type="match status" value="1"/>
</dbReference>
<dbReference type="PANTHER" id="PTHR42885:SF2">
    <property type="entry name" value="HISTIDINOL-PHOSPHATE AMINOTRANSFERASE"/>
    <property type="match status" value="1"/>
</dbReference>
<dbReference type="PANTHER" id="PTHR42885">
    <property type="entry name" value="HISTIDINOL-PHOSPHATE AMINOTRANSFERASE-RELATED"/>
    <property type="match status" value="1"/>
</dbReference>
<dbReference type="Pfam" id="PF00155">
    <property type="entry name" value="Aminotran_1_2"/>
    <property type="match status" value="1"/>
</dbReference>
<dbReference type="SUPFAM" id="SSF53383">
    <property type="entry name" value="PLP-dependent transferases"/>
    <property type="match status" value="1"/>
</dbReference>
<dbReference type="PROSITE" id="PS00599">
    <property type="entry name" value="AA_TRANSFER_CLASS_2"/>
    <property type="match status" value="1"/>
</dbReference>
<accession>Q8FG51</accession>
<evidence type="ECO:0000255" key="1">
    <source>
        <dbReference type="HAMAP-Rule" id="MF_01023"/>
    </source>
</evidence>
<reference key="1">
    <citation type="journal article" date="2002" name="Proc. Natl. Acad. Sci. U.S.A.">
        <title>Extensive mosaic structure revealed by the complete genome sequence of uropathogenic Escherichia coli.</title>
        <authorList>
            <person name="Welch R.A."/>
            <person name="Burland V."/>
            <person name="Plunkett G. III"/>
            <person name="Redford P."/>
            <person name="Roesch P."/>
            <person name="Rasko D."/>
            <person name="Buckles E.L."/>
            <person name="Liou S.-R."/>
            <person name="Boutin A."/>
            <person name="Hackett J."/>
            <person name="Stroud D."/>
            <person name="Mayhew G.F."/>
            <person name="Rose D.J."/>
            <person name="Zhou S."/>
            <person name="Schwartz D.C."/>
            <person name="Perna N.T."/>
            <person name="Mobley H.L.T."/>
            <person name="Donnenberg M.S."/>
            <person name="Blattner F.R."/>
        </authorList>
    </citation>
    <scope>NUCLEOTIDE SEQUENCE [LARGE SCALE GENOMIC DNA]</scope>
    <source>
        <strain>CFT073 / ATCC 700928 / UPEC</strain>
    </source>
</reference>
<proteinExistence type="inferred from homology"/>
<keyword id="KW-0028">Amino-acid biosynthesis</keyword>
<keyword id="KW-0032">Aminotransferase</keyword>
<keyword id="KW-0368">Histidine biosynthesis</keyword>
<keyword id="KW-0663">Pyridoxal phosphate</keyword>
<keyword id="KW-1185">Reference proteome</keyword>
<keyword id="KW-0808">Transferase</keyword>
<sequence>MSTVTITDLARENVRNLTPYQSARRLGGNGDVWLNANEYPTAVEFQLTQQTLNRYPECQPKVVIENYAQYAGVKPEQVLVSRGADEGIELLIRAFCEPGKDAILYCPPTYGMYSVSAETIGVECRTVPTLDNWQLDLQGISDKLDGVKVVYVCSPNNPTGQLINPQDFRTLLELTRGKAIVVADEAYIEFCPQASLAGWLAEYPHLAILRTLSKAFALAGLRCGFTLANEEVINLLMKVIAPYPLSTPVADIAAQALSPQGIVAMRERVAQIITEREYLIAALKEIPCVEQVFDSETNYILARFKASSAVFKSLWDQGIILRDQNKQPSLSGCLRITVGTREESQCVIDALRAEQV</sequence>
<name>HIS8_ECOL6</name>
<protein>
    <recommendedName>
        <fullName evidence="1">Histidinol-phosphate aminotransferase</fullName>
        <ecNumber evidence="1">2.6.1.9</ecNumber>
    </recommendedName>
    <alternativeName>
        <fullName evidence="1">Imidazole acetol-phosphate transaminase</fullName>
    </alternativeName>
</protein>
<feature type="chain" id="PRO_0000153362" description="Histidinol-phosphate aminotransferase">
    <location>
        <begin position="1"/>
        <end position="356"/>
    </location>
</feature>
<feature type="modified residue" description="N6-(pyridoxal phosphate)lysine" evidence="1">
    <location>
        <position position="214"/>
    </location>
</feature>
<comment type="catalytic activity">
    <reaction evidence="1">
        <text>L-histidinol phosphate + 2-oxoglutarate = 3-(imidazol-4-yl)-2-oxopropyl phosphate + L-glutamate</text>
        <dbReference type="Rhea" id="RHEA:23744"/>
        <dbReference type="ChEBI" id="CHEBI:16810"/>
        <dbReference type="ChEBI" id="CHEBI:29985"/>
        <dbReference type="ChEBI" id="CHEBI:57766"/>
        <dbReference type="ChEBI" id="CHEBI:57980"/>
        <dbReference type="EC" id="2.6.1.9"/>
    </reaction>
</comment>
<comment type="cofactor">
    <cofactor evidence="1">
        <name>pyridoxal 5'-phosphate</name>
        <dbReference type="ChEBI" id="CHEBI:597326"/>
    </cofactor>
</comment>
<comment type="pathway">
    <text evidence="1">Amino-acid biosynthesis; L-histidine biosynthesis; L-histidine from 5-phospho-alpha-D-ribose 1-diphosphate: step 7/9.</text>
</comment>
<comment type="subunit">
    <text evidence="1">Homodimer.</text>
</comment>
<comment type="similarity">
    <text evidence="1">Belongs to the class-II pyridoxal-phosphate-dependent aminotransferase family. Histidinol-phosphate aminotransferase subfamily.</text>
</comment>
<gene>
    <name evidence="1" type="primary">hisC</name>
    <name type="ordered locus">c2548</name>
</gene>
<organism>
    <name type="scientific">Escherichia coli O6:H1 (strain CFT073 / ATCC 700928 / UPEC)</name>
    <dbReference type="NCBI Taxonomy" id="199310"/>
    <lineage>
        <taxon>Bacteria</taxon>
        <taxon>Pseudomonadati</taxon>
        <taxon>Pseudomonadota</taxon>
        <taxon>Gammaproteobacteria</taxon>
        <taxon>Enterobacterales</taxon>
        <taxon>Enterobacteriaceae</taxon>
        <taxon>Escherichia</taxon>
    </lineage>
</organism>